<gene>
    <name type="primary">TAC3</name>
    <name type="synonym">NKNB</name>
</gene>
<accession>P08858</accession>
<evidence type="ECO:0000250" key="1"/>
<evidence type="ECO:0000255" key="2"/>
<evidence type="ECO:0000256" key="3">
    <source>
        <dbReference type="SAM" id="MobiDB-lite"/>
    </source>
</evidence>
<evidence type="ECO:0000305" key="4"/>
<keyword id="KW-0027">Amidation</keyword>
<keyword id="KW-0165">Cleavage on pair of basic residues</keyword>
<keyword id="KW-0527">Neuropeptide</keyword>
<keyword id="KW-1185">Reference proteome</keyword>
<keyword id="KW-0964">Secreted</keyword>
<keyword id="KW-0732">Signal</keyword>
<reference key="1">
    <citation type="journal article" date="1986" name="Proc. Natl. Acad. Sci. U.S.A.">
        <title>Structure and gene organization of bovine neuromedin K precursor.</title>
        <authorList>
            <person name="Kotani H."/>
            <person name="Hoshimaru M."/>
            <person name="Nawa H."/>
            <person name="Nakanishi S."/>
        </authorList>
    </citation>
    <scope>NUCLEOTIDE SEQUENCE [GENOMIC DNA]</scope>
</reference>
<comment type="function">
    <text evidence="1">Tachykinins are active peptides which excite neurons, evoke behavioral responses, are potent vasodilators and secretagogues, and contract (directly or indirectly) many smooth muscles. Is a critical central regulator of gonadal function (By similarity).</text>
</comment>
<comment type="subcellular location">
    <subcellularLocation>
        <location>Secreted</location>
    </subcellularLocation>
</comment>
<comment type="similarity">
    <text evidence="4">Belongs to the tachykinin family.</text>
</comment>
<name>TKNK_BOVIN</name>
<protein>
    <recommendedName>
        <fullName>Tachykinin-3</fullName>
    </recommendedName>
    <component>
        <recommendedName>
            <fullName>Neurokinin-B</fullName>
            <shortName>NKB</shortName>
        </recommendedName>
        <alternativeName>
            <fullName>Neuromedin-K</fullName>
        </alternativeName>
    </component>
</protein>
<proteinExistence type="inferred from homology"/>
<organism>
    <name type="scientific">Bos taurus</name>
    <name type="common">Bovine</name>
    <dbReference type="NCBI Taxonomy" id="9913"/>
    <lineage>
        <taxon>Eukaryota</taxon>
        <taxon>Metazoa</taxon>
        <taxon>Chordata</taxon>
        <taxon>Craniata</taxon>
        <taxon>Vertebrata</taxon>
        <taxon>Euteleostomi</taxon>
        <taxon>Mammalia</taxon>
        <taxon>Eutheria</taxon>
        <taxon>Laurasiatheria</taxon>
        <taxon>Artiodactyla</taxon>
        <taxon>Ruminantia</taxon>
        <taxon>Pecora</taxon>
        <taxon>Bovidae</taxon>
        <taxon>Bovinae</taxon>
        <taxon>Bos</taxon>
    </lineage>
</organism>
<dbReference type="EMBL" id="M14351">
    <property type="protein sequence ID" value="AAA30723.1"/>
    <property type="molecule type" value="Genomic_DNA"/>
</dbReference>
<dbReference type="EMBL" id="M14347">
    <property type="protein sequence ID" value="AAA30723.1"/>
    <property type="status" value="JOINED"/>
    <property type="molecule type" value="Genomic_DNA"/>
</dbReference>
<dbReference type="EMBL" id="M14348">
    <property type="protein sequence ID" value="AAA30723.1"/>
    <property type="status" value="JOINED"/>
    <property type="molecule type" value="Genomic_DNA"/>
</dbReference>
<dbReference type="EMBL" id="M14349">
    <property type="protein sequence ID" value="AAA30723.1"/>
    <property type="status" value="JOINED"/>
    <property type="molecule type" value="Genomic_DNA"/>
</dbReference>
<dbReference type="EMBL" id="M14350">
    <property type="protein sequence ID" value="AAA30723.1"/>
    <property type="status" value="JOINED"/>
    <property type="molecule type" value="Genomic_DNA"/>
</dbReference>
<dbReference type="PIR" id="A25905">
    <property type="entry name" value="A25905"/>
</dbReference>
<dbReference type="RefSeq" id="NP_851360.1">
    <property type="nucleotide sequence ID" value="NM_181017.2"/>
</dbReference>
<dbReference type="RefSeq" id="XP_010803423.1">
    <property type="nucleotide sequence ID" value="XM_010805121.2"/>
</dbReference>
<dbReference type="STRING" id="9913.ENSBTAP00000029067"/>
<dbReference type="PaxDb" id="9913-ENSBTAP00000029067"/>
<dbReference type="GeneID" id="281513"/>
<dbReference type="KEGG" id="bta:281513"/>
<dbReference type="CTD" id="6866"/>
<dbReference type="VEuPathDB" id="HostDB:ENSBTAG00000021807"/>
<dbReference type="eggNOG" id="ENOG502S4B9">
    <property type="taxonomic scope" value="Eukaryota"/>
</dbReference>
<dbReference type="HOGENOM" id="CLU_138627_0_0_1"/>
<dbReference type="InParanoid" id="P08858"/>
<dbReference type="OMA" id="MDFQKRD"/>
<dbReference type="OrthoDB" id="9397481at2759"/>
<dbReference type="TreeFam" id="TF337038"/>
<dbReference type="Reactome" id="R-BTA-380095">
    <property type="pathway name" value="Tachykinin receptors bind tachykinins"/>
</dbReference>
<dbReference type="Reactome" id="R-BTA-416476">
    <property type="pathway name" value="G alpha (q) signalling events"/>
</dbReference>
<dbReference type="Proteomes" id="UP000009136">
    <property type="component" value="Chromosome 5"/>
</dbReference>
<dbReference type="Bgee" id="ENSBTAG00000021807">
    <property type="expression patterns" value="Expressed in uterine cervix and 70 other cell types or tissues"/>
</dbReference>
<dbReference type="GO" id="GO:0005576">
    <property type="term" value="C:extracellular region"/>
    <property type="evidence" value="ECO:0007669"/>
    <property type="project" value="UniProtKB-SubCell"/>
</dbReference>
<dbReference type="GO" id="GO:0007218">
    <property type="term" value="P:neuropeptide signaling pathway"/>
    <property type="evidence" value="ECO:0007669"/>
    <property type="project" value="UniProtKB-KW"/>
</dbReference>
<dbReference type="GO" id="GO:0045777">
    <property type="term" value="P:positive regulation of blood pressure"/>
    <property type="evidence" value="ECO:0000318"/>
    <property type="project" value="GO_Central"/>
</dbReference>
<dbReference type="GO" id="GO:0007217">
    <property type="term" value="P:tachykinin receptor signaling pathway"/>
    <property type="evidence" value="ECO:0007669"/>
    <property type="project" value="InterPro"/>
</dbReference>
<dbReference type="InterPro" id="IPR003635">
    <property type="entry name" value="Neurokinin-B/TAC3"/>
</dbReference>
<dbReference type="InterPro" id="IPR013055">
    <property type="entry name" value="Tachy_Neuro_lke_CS"/>
</dbReference>
<dbReference type="PANTHER" id="PTHR15536">
    <property type="entry name" value="TACHYKININ-3"/>
    <property type="match status" value="1"/>
</dbReference>
<dbReference type="PANTHER" id="PTHR15536:SF1">
    <property type="entry name" value="TACHYKININ-3"/>
    <property type="match status" value="1"/>
</dbReference>
<dbReference type="Pfam" id="PF03823">
    <property type="entry name" value="Neurokinin_B"/>
    <property type="match status" value="1"/>
</dbReference>
<dbReference type="PIRSF" id="PIRSF001843">
    <property type="entry name" value="Neurokinin"/>
    <property type="match status" value="1"/>
</dbReference>
<dbReference type="PRINTS" id="PR01828">
    <property type="entry name" value="NEUROKININB"/>
</dbReference>
<dbReference type="PROSITE" id="PS00267">
    <property type="entry name" value="TACHYKININ"/>
    <property type="match status" value="1"/>
</dbReference>
<sequence>MRSTLLFAVILALSSARSLGAVCEESQEQVVPGGGHSKKDSNLYQLPPSLLRRLYDSRVVSLDGLLKMLSKASVGPKESPLPQKRDMHDFFVGLMGKRNLQPDTPVDINQENIPSFGTFKYPPSVE</sequence>
<feature type="signal peptide" evidence="2">
    <location>
        <begin position="1"/>
        <end position="20"/>
    </location>
</feature>
<feature type="propeptide" id="PRO_0000033562">
    <location>
        <begin position="21"/>
        <end position="83"/>
    </location>
</feature>
<feature type="peptide" id="PRO_0000033563" description="Neurokinin-B">
    <location>
        <begin position="86"/>
        <end position="95"/>
    </location>
</feature>
<feature type="propeptide" id="PRO_0000033564">
    <location>
        <begin position="99"/>
        <end position="126"/>
    </location>
</feature>
<feature type="region of interest" description="Disordered" evidence="3">
    <location>
        <begin position="102"/>
        <end position="126"/>
    </location>
</feature>
<feature type="modified residue" description="Methionine amide" evidence="1">
    <location>
        <position position="95"/>
    </location>
</feature>